<protein>
    <recommendedName>
        <fullName evidence="1">Transcription elongation factor GreA</fullName>
    </recommendedName>
    <alternativeName>
        <fullName evidence="1">Transcript cleavage factor GreA</fullName>
    </alternativeName>
</protein>
<proteinExistence type="inferred from homology"/>
<organism>
    <name type="scientific">Rickettsia typhi (strain ATCC VR-144 / Wilmington)</name>
    <dbReference type="NCBI Taxonomy" id="257363"/>
    <lineage>
        <taxon>Bacteria</taxon>
        <taxon>Pseudomonadati</taxon>
        <taxon>Pseudomonadota</taxon>
        <taxon>Alphaproteobacteria</taxon>
        <taxon>Rickettsiales</taxon>
        <taxon>Rickettsiaceae</taxon>
        <taxon>Rickettsieae</taxon>
        <taxon>Rickettsia</taxon>
        <taxon>typhus group</taxon>
    </lineage>
</organism>
<evidence type="ECO:0000255" key="1">
    <source>
        <dbReference type="HAMAP-Rule" id="MF_00105"/>
    </source>
</evidence>
<name>GREA_RICTY</name>
<sequence length="162" mass="18228">MNTKFPITAKGFKKLEHELKHLKHVERKKISEDIAEAREHGDLSENAEYEAAREKQAFIEGRIKELEDMTARAEIIDICKLSGDNIKFGATVTLIDDDTEEEVTYVIVGEYEADITKKRVSIASPIAKALIGKSVGDFVEVITPKGLKSYEVVTVEYKELDL</sequence>
<dbReference type="EMBL" id="AE017197">
    <property type="protein sequence ID" value="AAU04304.1"/>
    <property type="molecule type" value="Genomic_DNA"/>
</dbReference>
<dbReference type="RefSeq" id="WP_011191278.1">
    <property type="nucleotide sequence ID" value="NC_006142.1"/>
</dbReference>
<dbReference type="SMR" id="Q68VQ2"/>
<dbReference type="KEGG" id="rty:RT0850"/>
<dbReference type="eggNOG" id="COG0782">
    <property type="taxonomic scope" value="Bacteria"/>
</dbReference>
<dbReference type="HOGENOM" id="CLU_101379_2_0_5"/>
<dbReference type="OrthoDB" id="9808774at2"/>
<dbReference type="Proteomes" id="UP000000604">
    <property type="component" value="Chromosome"/>
</dbReference>
<dbReference type="GO" id="GO:0003677">
    <property type="term" value="F:DNA binding"/>
    <property type="evidence" value="ECO:0007669"/>
    <property type="project" value="UniProtKB-UniRule"/>
</dbReference>
<dbReference type="GO" id="GO:0070063">
    <property type="term" value="F:RNA polymerase binding"/>
    <property type="evidence" value="ECO:0007669"/>
    <property type="project" value="InterPro"/>
</dbReference>
<dbReference type="GO" id="GO:0006354">
    <property type="term" value="P:DNA-templated transcription elongation"/>
    <property type="evidence" value="ECO:0007669"/>
    <property type="project" value="TreeGrafter"/>
</dbReference>
<dbReference type="GO" id="GO:0032784">
    <property type="term" value="P:regulation of DNA-templated transcription elongation"/>
    <property type="evidence" value="ECO:0007669"/>
    <property type="project" value="UniProtKB-UniRule"/>
</dbReference>
<dbReference type="FunFam" id="1.10.287.180:FF:000001">
    <property type="entry name" value="Transcription elongation factor GreA"/>
    <property type="match status" value="1"/>
</dbReference>
<dbReference type="FunFam" id="3.10.50.30:FF:000001">
    <property type="entry name" value="Transcription elongation factor GreA"/>
    <property type="match status" value="1"/>
</dbReference>
<dbReference type="Gene3D" id="3.10.50.30">
    <property type="entry name" value="Transcription elongation factor, GreA/GreB, C-terminal domain"/>
    <property type="match status" value="1"/>
</dbReference>
<dbReference type="Gene3D" id="1.10.287.180">
    <property type="entry name" value="Transcription elongation factor, GreA/GreB, N-terminal domain"/>
    <property type="match status" value="1"/>
</dbReference>
<dbReference type="HAMAP" id="MF_00105">
    <property type="entry name" value="GreA_GreB"/>
    <property type="match status" value="1"/>
</dbReference>
<dbReference type="InterPro" id="IPR036953">
    <property type="entry name" value="GreA/GreB_C_sf"/>
</dbReference>
<dbReference type="InterPro" id="IPR018151">
    <property type="entry name" value="TF_GreA/GreB_CS"/>
</dbReference>
<dbReference type="InterPro" id="IPR006359">
    <property type="entry name" value="Tscrpt_elong_fac_GreA"/>
</dbReference>
<dbReference type="InterPro" id="IPR028624">
    <property type="entry name" value="Tscrpt_elong_fac_GreA/B"/>
</dbReference>
<dbReference type="InterPro" id="IPR001437">
    <property type="entry name" value="Tscrpt_elong_fac_GreA/B_C"/>
</dbReference>
<dbReference type="InterPro" id="IPR023459">
    <property type="entry name" value="Tscrpt_elong_fac_GreA/B_fam"/>
</dbReference>
<dbReference type="InterPro" id="IPR022691">
    <property type="entry name" value="Tscrpt_elong_fac_GreA/B_N"/>
</dbReference>
<dbReference type="InterPro" id="IPR036805">
    <property type="entry name" value="Tscrpt_elong_fac_GreA/B_N_sf"/>
</dbReference>
<dbReference type="NCBIfam" id="TIGR01462">
    <property type="entry name" value="greA"/>
    <property type="match status" value="1"/>
</dbReference>
<dbReference type="NCBIfam" id="NF001261">
    <property type="entry name" value="PRK00226.1-2"/>
    <property type="match status" value="1"/>
</dbReference>
<dbReference type="NCBIfam" id="NF001263">
    <property type="entry name" value="PRK00226.1-4"/>
    <property type="match status" value="1"/>
</dbReference>
<dbReference type="NCBIfam" id="NF001264">
    <property type="entry name" value="PRK00226.1-5"/>
    <property type="match status" value="1"/>
</dbReference>
<dbReference type="PANTHER" id="PTHR30437">
    <property type="entry name" value="TRANSCRIPTION ELONGATION FACTOR GREA"/>
    <property type="match status" value="1"/>
</dbReference>
<dbReference type="PANTHER" id="PTHR30437:SF4">
    <property type="entry name" value="TRANSCRIPTION ELONGATION FACTOR GREA"/>
    <property type="match status" value="1"/>
</dbReference>
<dbReference type="Pfam" id="PF01272">
    <property type="entry name" value="GreA_GreB"/>
    <property type="match status" value="1"/>
</dbReference>
<dbReference type="Pfam" id="PF03449">
    <property type="entry name" value="GreA_GreB_N"/>
    <property type="match status" value="1"/>
</dbReference>
<dbReference type="PIRSF" id="PIRSF006092">
    <property type="entry name" value="GreA_GreB"/>
    <property type="match status" value="1"/>
</dbReference>
<dbReference type="SUPFAM" id="SSF54534">
    <property type="entry name" value="FKBP-like"/>
    <property type="match status" value="1"/>
</dbReference>
<dbReference type="SUPFAM" id="SSF46557">
    <property type="entry name" value="GreA transcript cleavage protein, N-terminal domain"/>
    <property type="match status" value="1"/>
</dbReference>
<dbReference type="PROSITE" id="PS00829">
    <property type="entry name" value="GREAB_1"/>
    <property type="match status" value="1"/>
</dbReference>
<dbReference type="PROSITE" id="PS00830">
    <property type="entry name" value="GREAB_2"/>
    <property type="match status" value="1"/>
</dbReference>
<reference key="1">
    <citation type="journal article" date="2004" name="J. Bacteriol.">
        <title>Complete genome sequence of Rickettsia typhi and comparison with sequences of other Rickettsiae.</title>
        <authorList>
            <person name="McLeod M.P."/>
            <person name="Qin X."/>
            <person name="Karpathy S.E."/>
            <person name="Gioia J."/>
            <person name="Highlander S.K."/>
            <person name="Fox G.E."/>
            <person name="McNeill T.Z."/>
            <person name="Jiang H."/>
            <person name="Muzny D."/>
            <person name="Jacob L.S."/>
            <person name="Hawes A.C."/>
            <person name="Sodergren E."/>
            <person name="Gill R."/>
            <person name="Hume J."/>
            <person name="Morgan M."/>
            <person name="Fan G."/>
            <person name="Amin A.G."/>
            <person name="Gibbs R.A."/>
            <person name="Hong C."/>
            <person name="Yu X.-J."/>
            <person name="Walker D.H."/>
            <person name="Weinstock G.M."/>
        </authorList>
    </citation>
    <scope>NUCLEOTIDE SEQUENCE [LARGE SCALE GENOMIC DNA]</scope>
    <source>
        <strain>ATCC VR-144 / Wilmington</strain>
    </source>
</reference>
<gene>
    <name evidence="1" type="primary">greA</name>
    <name type="ordered locus">RT0850</name>
</gene>
<keyword id="KW-0175">Coiled coil</keyword>
<keyword id="KW-0238">DNA-binding</keyword>
<keyword id="KW-0804">Transcription</keyword>
<keyword id="KW-0805">Transcription regulation</keyword>
<comment type="function">
    <text evidence="1">Necessary for efficient RNA polymerase transcription elongation past template-encoded arresting sites. The arresting sites in DNA have the property of trapping a certain fraction of elongating RNA polymerases that pass through, resulting in locked ternary complexes. Cleavage of the nascent transcript by cleavage factors such as GreA or GreB allows the resumption of elongation from the new 3'terminus. GreA releases sequences of 2 to 3 nucleotides.</text>
</comment>
<comment type="similarity">
    <text evidence="1">Belongs to the GreA/GreB family.</text>
</comment>
<accession>Q68VQ2</accession>
<feature type="chain" id="PRO_0000277902" description="Transcription elongation factor GreA">
    <location>
        <begin position="1"/>
        <end position="162"/>
    </location>
</feature>
<feature type="coiled-coil region" evidence="1">
    <location>
        <begin position="45"/>
        <end position="74"/>
    </location>
</feature>